<reference key="1">
    <citation type="journal article" date="2009" name="PLoS Genet.">
        <title>Organised genome dynamics in the Escherichia coli species results in highly diverse adaptive paths.</title>
        <authorList>
            <person name="Touchon M."/>
            <person name="Hoede C."/>
            <person name="Tenaillon O."/>
            <person name="Barbe V."/>
            <person name="Baeriswyl S."/>
            <person name="Bidet P."/>
            <person name="Bingen E."/>
            <person name="Bonacorsi S."/>
            <person name="Bouchier C."/>
            <person name="Bouvet O."/>
            <person name="Calteau A."/>
            <person name="Chiapello H."/>
            <person name="Clermont O."/>
            <person name="Cruveiller S."/>
            <person name="Danchin A."/>
            <person name="Diard M."/>
            <person name="Dossat C."/>
            <person name="Karoui M.E."/>
            <person name="Frapy E."/>
            <person name="Garry L."/>
            <person name="Ghigo J.M."/>
            <person name="Gilles A.M."/>
            <person name="Johnson J."/>
            <person name="Le Bouguenec C."/>
            <person name="Lescat M."/>
            <person name="Mangenot S."/>
            <person name="Martinez-Jehanne V."/>
            <person name="Matic I."/>
            <person name="Nassif X."/>
            <person name="Oztas S."/>
            <person name="Petit M.A."/>
            <person name="Pichon C."/>
            <person name="Rouy Z."/>
            <person name="Ruf C.S."/>
            <person name="Schneider D."/>
            <person name="Tourret J."/>
            <person name="Vacherie B."/>
            <person name="Vallenet D."/>
            <person name="Medigue C."/>
            <person name="Rocha E.P.C."/>
            <person name="Denamur E."/>
        </authorList>
    </citation>
    <scope>NUCLEOTIDE SEQUENCE [LARGE SCALE GENOMIC DNA]</scope>
    <source>
        <strain>55989 / EAEC</strain>
    </source>
</reference>
<protein>
    <recommendedName>
        <fullName evidence="1">Protein RecA</fullName>
    </recommendedName>
    <alternativeName>
        <fullName evidence="1">Recombinase A</fullName>
    </alternativeName>
</protein>
<accession>B7LEB1</accession>
<organism>
    <name type="scientific">Escherichia coli (strain 55989 / EAEC)</name>
    <dbReference type="NCBI Taxonomy" id="585055"/>
    <lineage>
        <taxon>Bacteria</taxon>
        <taxon>Pseudomonadati</taxon>
        <taxon>Pseudomonadota</taxon>
        <taxon>Gammaproteobacteria</taxon>
        <taxon>Enterobacterales</taxon>
        <taxon>Enterobacteriaceae</taxon>
        <taxon>Escherichia</taxon>
    </lineage>
</organism>
<name>RECA_ECO55</name>
<dbReference type="EMBL" id="CU928145">
    <property type="protein sequence ID" value="CAU98847.1"/>
    <property type="molecule type" value="Genomic_DNA"/>
</dbReference>
<dbReference type="RefSeq" id="WP_000963143.1">
    <property type="nucleotide sequence ID" value="NZ_CP028304.1"/>
</dbReference>
<dbReference type="SMR" id="B7LEB1"/>
<dbReference type="GeneID" id="93779312"/>
<dbReference type="KEGG" id="eck:EC55989_2961"/>
<dbReference type="HOGENOM" id="CLU_040469_3_2_6"/>
<dbReference type="Proteomes" id="UP000000746">
    <property type="component" value="Chromosome"/>
</dbReference>
<dbReference type="GO" id="GO:0005829">
    <property type="term" value="C:cytosol"/>
    <property type="evidence" value="ECO:0007669"/>
    <property type="project" value="TreeGrafter"/>
</dbReference>
<dbReference type="GO" id="GO:0005524">
    <property type="term" value="F:ATP binding"/>
    <property type="evidence" value="ECO:0007669"/>
    <property type="project" value="UniProtKB-UniRule"/>
</dbReference>
<dbReference type="GO" id="GO:0016887">
    <property type="term" value="F:ATP hydrolysis activity"/>
    <property type="evidence" value="ECO:0007669"/>
    <property type="project" value="InterPro"/>
</dbReference>
<dbReference type="GO" id="GO:0140664">
    <property type="term" value="F:ATP-dependent DNA damage sensor activity"/>
    <property type="evidence" value="ECO:0007669"/>
    <property type="project" value="InterPro"/>
</dbReference>
<dbReference type="GO" id="GO:0003684">
    <property type="term" value="F:damaged DNA binding"/>
    <property type="evidence" value="ECO:0007669"/>
    <property type="project" value="UniProtKB-UniRule"/>
</dbReference>
<dbReference type="GO" id="GO:0003697">
    <property type="term" value="F:single-stranded DNA binding"/>
    <property type="evidence" value="ECO:0007669"/>
    <property type="project" value="UniProtKB-UniRule"/>
</dbReference>
<dbReference type="GO" id="GO:0006310">
    <property type="term" value="P:DNA recombination"/>
    <property type="evidence" value="ECO:0007669"/>
    <property type="project" value="UniProtKB-UniRule"/>
</dbReference>
<dbReference type="GO" id="GO:0006281">
    <property type="term" value="P:DNA repair"/>
    <property type="evidence" value="ECO:0007669"/>
    <property type="project" value="UniProtKB-UniRule"/>
</dbReference>
<dbReference type="GO" id="GO:0009432">
    <property type="term" value="P:SOS response"/>
    <property type="evidence" value="ECO:0007669"/>
    <property type="project" value="UniProtKB-UniRule"/>
</dbReference>
<dbReference type="CDD" id="cd00983">
    <property type="entry name" value="RecA"/>
    <property type="match status" value="1"/>
</dbReference>
<dbReference type="FunFam" id="3.40.50.300:FF:000087">
    <property type="entry name" value="Recombinase RecA"/>
    <property type="match status" value="1"/>
</dbReference>
<dbReference type="Gene3D" id="3.40.50.300">
    <property type="entry name" value="P-loop containing nucleotide triphosphate hydrolases"/>
    <property type="match status" value="1"/>
</dbReference>
<dbReference type="HAMAP" id="MF_00268">
    <property type="entry name" value="RecA"/>
    <property type="match status" value="1"/>
</dbReference>
<dbReference type="InterPro" id="IPR003593">
    <property type="entry name" value="AAA+_ATPase"/>
</dbReference>
<dbReference type="InterPro" id="IPR013765">
    <property type="entry name" value="DNA_recomb/repair_RecA"/>
</dbReference>
<dbReference type="InterPro" id="IPR020584">
    <property type="entry name" value="DNA_recomb/repair_RecA_CS"/>
</dbReference>
<dbReference type="InterPro" id="IPR027417">
    <property type="entry name" value="P-loop_NTPase"/>
</dbReference>
<dbReference type="InterPro" id="IPR049261">
    <property type="entry name" value="RecA-like_C"/>
</dbReference>
<dbReference type="InterPro" id="IPR049428">
    <property type="entry name" value="RecA-like_N"/>
</dbReference>
<dbReference type="InterPro" id="IPR020588">
    <property type="entry name" value="RecA_ATP-bd"/>
</dbReference>
<dbReference type="InterPro" id="IPR023400">
    <property type="entry name" value="RecA_C_sf"/>
</dbReference>
<dbReference type="InterPro" id="IPR020587">
    <property type="entry name" value="RecA_monomer-monomer_interface"/>
</dbReference>
<dbReference type="NCBIfam" id="TIGR02012">
    <property type="entry name" value="tigrfam_recA"/>
    <property type="match status" value="1"/>
</dbReference>
<dbReference type="PANTHER" id="PTHR45900:SF1">
    <property type="entry name" value="MITOCHONDRIAL DNA REPAIR PROTEIN RECA HOMOLOG-RELATED"/>
    <property type="match status" value="1"/>
</dbReference>
<dbReference type="PANTHER" id="PTHR45900">
    <property type="entry name" value="RECA"/>
    <property type="match status" value="1"/>
</dbReference>
<dbReference type="Pfam" id="PF00154">
    <property type="entry name" value="RecA"/>
    <property type="match status" value="1"/>
</dbReference>
<dbReference type="Pfam" id="PF21096">
    <property type="entry name" value="RecA_C"/>
    <property type="match status" value="1"/>
</dbReference>
<dbReference type="PRINTS" id="PR00142">
    <property type="entry name" value="RECA"/>
</dbReference>
<dbReference type="SMART" id="SM00382">
    <property type="entry name" value="AAA"/>
    <property type="match status" value="1"/>
</dbReference>
<dbReference type="SUPFAM" id="SSF52540">
    <property type="entry name" value="P-loop containing nucleoside triphosphate hydrolases"/>
    <property type="match status" value="1"/>
</dbReference>
<dbReference type="SUPFAM" id="SSF54752">
    <property type="entry name" value="RecA protein, C-terminal domain"/>
    <property type="match status" value="1"/>
</dbReference>
<dbReference type="PROSITE" id="PS00321">
    <property type="entry name" value="RECA_1"/>
    <property type="match status" value="1"/>
</dbReference>
<dbReference type="PROSITE" id="PS50162">
    <property type="entry name" value="RECA_2"/>
    <property type="match status" value="1"/>
</dbReference>
<dbReference type="PROSITE" id="PS50163">
    <property type="entry name" value="RECA_3"/>
    <property type="match status" value="1"/>
</dbReference>
<evidence type="ECO:0000255" key="1">
    <source>
        <dbReference type="HAMAP-Rule" id="MF_00268"/>
    </source>
</evidence>
<evidence type="ECO:0000256" key="2">
    <source>
        <dbReference type="SAM" id="MobiDB-lite"/>
    </source>
</evidence>
<feature type="chain" id="PRO_1000193306" description="Protein RecA">
    <location>
        <begin position="1"/>
        <end position="353"/>
    </location>
</feature>
<feature type="region of interest" description="Disordered" evidence="2">
    <location>
        <begin position="330"/>
        <end position="353"/>
    </location>
</feature>
<feature type="compositionally biased region" description="Acidic residues" evidence="2">
    <location>
        <begin position="339"/>
        <end position="353"/>
    </location>
</feature>
<feature type="binding site" evidence="1">
    <location>
        <begin position="67"/>
        <end position="74"/>
    </location>
    <ligand>
        <name>ATP</name>
        <dbReference type="ChEBI" id="CHEBI:30616"/>
    </ligand>
</feature>
<sequence length="353" mass="37973">MAIDENKQKALAAALGQIEKQFGKGSIMRLGEDRSMDVETISTGSLSLDIALGAGGLPMGRIVEIYGPESSGKTTLTLQVIAAAQREGKTCAFIDAEHALDPIYARKLGVDIDNLLCSQPDTGEQALEICDALARSGAVDVIVVDSVAALTPKAEIEGEIGDSHMGLAARMMSQAMRKLAGNLKQSNTLLIFINQIRMKIGVMFGNPETTTGGNALKFYASVRLDIRRIGAVKEGENVVGSETRVKVVKNKIAAPFKQAEFQILYGEGINFYGELVDLGVKEKLIEKAGAWYSYKGEKIGQGKANATAWLKDNPETAKEIEKKVRELLLSNPNSTPDFSVDDSEGVAETNEDF</sequence>
<comment type="function">
    <text evidence="1">Can catalyze the hydrolysis of ATP in the presence of single-stranded DNA, the ATP-dependent uptake of single-stranded DNA by duplex DNA, and the ATP-dependent hybridization of homologous single-stranded DNAs. It interacts with LexA causing its activation and leading to its autocatalytic cleavage.</text>
</comment>
<comment type="subcellular location">
    <subcellularLocation>
        <location evidence="1">Cytoplasm</location>
    </subcellularLocation>
</comment>
<comment type="similarity">
    <text evidence="1">Belongs to the RecA family.</text>
</comment>
<gene>
    <name evidence="1" type="primary">recA</name>
    <name type="ordered locus">EC55989_2961</name>
</gene>
<proteinExistence type="inferred from homology"/>
<keyword id="KW-0067">ATP-binding</keyword>
<keyword id="KW-0963">Cytoplasm</keyword>
<keyword id="KW-0227">DNA damage</keyword>
<keyword id="KW-0233">DNA recombination</keyword>
<keyword id="KW-0234">DNA repair</keyword>
<keyword id="KW-0238">DNA-binding</keyword>
<keyword id="KW-0547">Nucleotide-binding</keyword>
<keyword id="KW-1185">Reference proteome</keyword>
<keyword id="KW-0742">SOS response</keyword>